<reference key="1">
    <citation type="journal article" date="2002" name="Proc. Natl. Acad. Sci. U.S.A.">
        <title>The genome sequence of the facultative intracellular pathogen Brucella melitensis.</title>
        <authorList>
            <person name="DelVecchio V.G."/>
            <person name="Kapatral V."/>
            <person name="Redkar R.J."/>
            <person name="Patra G."/>
            <person name="Mujer C."/>
            <person name="Los T."/>
            <person name="Ivanova N."/>
            <person name="Anderson I."/>
            <person name="Bhattacharyya A."/>
            <person name="Lykidis A."/>
            <person name="Reznik G."/>
            <person name="Jablonski L."/>
            <person name="Larsen N."/>
            <person name="D'Souza M."/>
            <person name="Bernal A."/>
            <person name="Mazur M."/>
            <person name="Goltsman E."/>
            <person name="Selkov E."/>
            <person name="Elzer P.H."/>
            <person name="Hagius S."/>
            <person name="O'Callaghan D."/>
            <person name="Letesson J.-J."/>
            <person name="Haselkorn R."/>
            <person name="Kyrpides N.C."/>
            <person name="Overbeek R."/>
        </authorList>
    </citation>
    <scope>NUCLEOTIDE SEQUENCE [LARGE SCALE GENOMIC DNA]</scope>
    <source>
        <strain>ATCC 23456 / CCUG 17765 / NCTC 10094 / 16M</strain>
    </source>
</reference>
<name>APAG_BRUME</name>
<proteinExistence type="inferred from homology"/>
<accession>Q8YFA4</accession>
<gene>
    <name evidence="1" type="primary">apaG</name>
    <name type="ordered locus">BMEI1618</name>
</gene>
<sequence length="130" mass="14562">MYSAVTRGIEVTVEPFYLEVQSEPEENRYVWGYRVTIVNNSSETVQLCSRYWQITDANGHVQEVRGSGVVGKQPVLDPGDSYQYSSGCPLTTSSGVMVGRYQMKGEDGAQFEIEIPAFSLDVPEQRRTLN</sequence>
<organism>
    <name type="scientific">Brucella melitensis biotype 1 (strain ATCC 23456 / CCUG 17765 / NCTC 10094 / 16M)</name>
    <dbReference type="NCBI Taxonomy" id="224914"/>
    <lineage>
        <taxon>Bacteria</taxon>
        <taxon>Pseudomonadati</taxon>
        <taxon>Pseudomonadota</taxon>
        <taxon>Alphaproteobacteria</taxon>
        <taxon>Hyphomicrobiales</taxon>
        <taxon>Brucellaceae</taxon>
        <taxon>Brucella/Ochrobactrum group</taxon>
        <taxon>Brucella</taxon>
    </lineage>
</organism>
<dbReference type="EMBL" id="AE008917">
    <property type="protein sequence ID" value="AAL52799.1"/>
    <property type="status" value="ALT_INIT"/>
    <property type="molecule type" value="Genomic_DNA"/>
</dbReference>
<dbReference type="PIR" id="AD3454">
    <property type="entry name" value="AD3454"/>
</dbReference>
<dbReference type="RefSeq" id="WP_002963468.1">
    <property type="nucleotide sequence ID" value="NZ_GG703778.1"/>
</dbReference>
<dbReference type="SMR" id="Q8YFA4"/>
<dbReference type="GeneID" id="93017229"/>
<dbReference type="KEGG" id="bme:BMEI1618"/>
<dbReference type="KEGG" id="bmel:DK63_1873"/>
<dbReference type="PATRIC" id="fig|224914.52.peg.1972"/>
<dbReference type="eggNOG" id="COG2967">
    <property type="taxonomic scope" value="Bacteria"/>
</dbReference>
<dbReference type="PhylomeDB" id="Q8YFA4"/>
<dbReference type="Proteomes" id="UP000000419">
    <property type="component" value="Chromosome I"/>
</dbReference>
<dbReference type="GO" id="GO:0070987">
    <property type="term" value="P:error-free translesion synthesis"/>
    <property type="evidence" value="ECO:0007669"/>
    <property type="project" value="TreeGrafter"/>
</dbReference>
<dbReference type="Gene3D" id="2.60.40.1470">
    <property type="entry name" value="ApaG domain"/>
    <property type="match status" value="1"/>
</dbReference>
<dbReference type="HAMAP" id="MF_00791">
    <property type="entry name" value="ApaG"/>
    <property type="match status" value="1"/>
</dbReference>
<dbReference type="InterPro" id="IPR007474">
    <property type="entry name" value="ApaG_domain"/>
</dbReference>
<dbReference type="InterPro" id="IPR036767">
    <property type="entry name" value="ApaG_sf"/>
</dbReference>
<dbReference type="InterPro" id="IPR023065">
    <property type="entry name" value="Uncharacterised_ApaG"/>
</dbReference>
<dbReference type="NCBIfam" id="NF003967">
    <property type="entry name" value="PRK05461.1"/>
    <property type="match status" value="1"/>
</dbReference>
<dbReference type="PANTHER" id="PTHR14289">
    <property type="entry name" value="F-BOX ONLY PROTEIN 3"/>
    <property type="match status" value="1"/>
</dbReference>
<dbReference type="PANTHER" id="PTHR14289:SF16">
    <property type="entry name" value="POLYMERASE DELTA-INTERACTING PROTEIN 2"/>
    <property type="match status" value="1"/>
</dbReference>
<dbReference type="Pfam" id="PF04379">
    <property type="entry name" value="DUF525"/>
    <property type="match status" value="1"/>
</dbReference>
<dbReference type="SUPFAM" id="SSF110069">
    <property type="entry name" value="ApaG-like"/>
    <property type="match status" value="1"/>
</dbReference>
<dbReference type="PROSITE" id="PS51087">
    <property type="entry name" value="APAG"/>
    <property type="match status" value="1"/>
</dbReference>
<evidence type="ECO:0000255" key="1">
    <source>
        <dbReference type="HAMAP-Rule" id="MF_00791"/>
    </source>
</evidence>
<evidence type="ECO:0000305" key="2"/>
<comment type="sequence caution" evidence="2">
    <conflict type="erroneous initiation">
        <sequence resource="EMBL-CDS" id="AAL52799"/>
    </conflict>
</comment>
<feature type="chain" id="PRO_0000197942" description="Protein ApaG">
    <location>
        <begin position="1"/>
        <end position="130"/>
    </location>
</feature>
<feature type="domain" description="ApaG" evidence="1">
    <location>
        <begin position="3"/>
        <end position="127"/>
    </location>
</feature>
<protein>
    <recommendedName>
        <fullName evidence="1">Protein ApaG</fullName>
    </recommendedName>
</protein>